<evidence type="ECO:0000250" key="1"/>
<evidence type="ECO:0000305" key="2"/>
<feature type="chain" id="PRO_0000072935" description="Glycine--tRNA ligase beta subunit">
    <location>
        <begin position="1"/>
        <end position="688"/>
    </location>
</feature>
<comment type="catalytic activity">
    <reaction>
        <text>tRNA(Gly) + glycine + ATP = glycyl-tRNA(Gly) + AMP + diphosphate</text>
        <dbReference type="Rhea" id="RHEA:16013"/>
        <dbReference type="Rhea" id="RHEA-COMP:9664"/>
        <dbReference type="Rhea" id="RHEA-COMP:9683"/>
        <dbReference type="ChEBI" id="CHEBI:30616"/>
        <dbReference type="ChEBI" id="CHEBI:33019"/>
        <dbReference type="ChEBI" id="CHEBI:57305"/>
        <dbReference type="ChEBI" id="CHEBI:78442"/>
        <dbReference type="ChEBI" id="CHEBI:78522"/>
        <dbReference type="ChEBI" id="CHEBI:456215"/>
        <dbReference type="EC" id="6.1.1.14"/>
    </reaction>
</comment>
<comment type="subunit">
    <text evidence="1">Tetramer of two alpha and two beta subunits.</text>
</comment>
<comment type="subcellular location">
    <subcellularLocation>
        <location evidence="1">Cytoplasm</location>
    </subcellularLocation>
</comment>
<comment type="similarity">
    <text evidence="2">Belongs to the class-II aminoacyl-tRNA synthetase family.</text>
</comment>
<dbReference type="EC" id="6.1.1.14"/>
<dbReference type="EMBL" id="AE003852">
    <property type="protein sequence ID" value="AAF93198.1"/>
    <property type="molecule type" value="Genomic_DNA"/>
</dbReference>
<dbReference type="PIR" id="F82373">
    <property type="entry name" value="F82373"/>
</dbReference>
<dbReference type="RefSeq" id="NP_229679.1">
    <property type="nucleotide sequence ID" value="NC_002505.1"/>
</dbReference>
<dbReference type="RefSeq" id="WP_001040221.1">
    <property type="nucleotide sequence ID" value="NZ_LT906614.1"/>
</dbReference>
<dbReference type="SMR" id="Q9KVW8"/>
<dbReference type="STRING" id="243277.VC_0020"/>
<dbReference type="DNASU" id="2614960"/>
<dbReference type="EnsemblBacteria" id="AAF93198">
    <property type="protein sequence ID" value="AAF93198"/>
    <property type="gene ID" value="VC_0020"/>
</dbReference>
<dbReference type="KEGG" id="vch:VC_0020"/>
<dbReference type="PATRIC" id="fig|243277.26.peg.19"/>
<dbReference type="eggNOG" id="COG0751">
    <property type="taxonomic scope" value="Bacteria"/>
</dbReference>
<dbReference type="HOGENOM" id="CLU_007220_2_2_6"/>
<dbReference type="Proteomes" id="UP000000584">
    <property type="component" value="Chromosome 1"/>
</dbReference>
<dbReference type="GO" id="GO:0005829">
    <property type="term" value="C:cytosol"/>
    <property type="evidence" value="ECO:0000318"/>
    <property type="project" value="GO_Central"/>
</dbReference>
<dbReference type="GO" id="GO:0004814">
    <property type="term" value="F:arginine-tRNA ligase activity"/>
    <property type="evidence" value="ECO:0007669"/>
    <property type="project" value="InterPro"/>
</dbReference>
<dbReference type="GO" id="GO:0005524">
    <property type="term" value="F:ATP binding"/>
    <property type="evidence" value="ECO:0007669"/>
    <property type="project" value="UniProtKB-UniRule"/>
</dbReference>
<dbReference type="GO" id="GO:0004820">
    <property type="term" value="F:glycine-tRNA ligase activity"/>
    <property type="evidence" value="ECO:0007669"/>
    <property type="project" value="UniProtKB-UniRule"/>
</dbReference>
<dbReference type="GO" id="GO:0006420">
    <property type="term" value="P:arginyl-tRNA aminoacylation"/>
    <property type="evidence" value="ECO:0007669"/>
    <property type="project" value="InterPro"/>
</dbReference>
<dbReference type="GO" id="GO:0006426">
    <property type="term" value="P:glycyl-tRNA aminoacylation"/>
    <property type="evidence" value="ECO:0007669"/>
    <property type="project" value="UniProtKB-UniRule"/>
</dbReference>
<dbReference type="HAMAP" id="MF_00255">
    <property type="entry name" value="Gly_tRNA_synth_beta"/>
    <property type="match status" value="1"/>
</dbReference>
<dbReference type="InterPro" id="IPR008909">
    <property type="entry name" value="DALR_anticod-bd"/>
</dbReference>
<dbReference type="InterPro" id="IPR015944">
    <property type="entry name" value="Gly-tRNA-synth_bsu"/>
</dbReference>
<dbReference type="InterPro" id="IPR006194">
    <property type="entry name" value="Gly-tRNA-synth_heterodimer"/>
</dbReference>
<dbReference type="NCBIfam" id="TIGR00211">
    <property type="entry name" value="glyS"/>
    <property type="match status" value="1"/>
</dbReference>
<dbReference type="PANTHER" id="PTHR30075:SF2">
    <property type="entry name" value="GLYCINE--TRNA LIGASE, CHLOROPLASTIC_MITOCHONDRIAL 2"/>
    <property type="match status" value="1"/>
</dbReference>
<dbReference type="PANTHER" id="PTHR30075">
    <property type="entry name" value="GLYCYL-TRNA SYNTHETASE"/>
    <property type="match status" value="1"/>
</dbReference>
<dbReference type="Pfam" id="PF05746">
    <property type="entry name" value="DALR_1"/>
    <property type="match status" value="1"/>
</dbReference>
<dbReference type="Pfam" id="PF02092">
    <property type="entry name" value="tRNA_synt_2f"/>
    <property type="match status" value="1"/>
</dbReference>
<dbReference type="PRINTS" id="PR01045">
    <property type="entry name" value="TRNASYNTHGB"/>
</dbReference>
<dbReference type="SUPFAM" id="SSF109604">
    <property type="entry name" value="HD-domain/PDEase-like"/>
    <property type="match status" value="1"/>
</dbReference>
<dbReference type="PROSITE" id="PS50861">
    <property type="entry name" value="AA_TRNA_LIGASE_II_GLYAB"/>
    <property type="match status" value="1"/>
</dbReference>
<keyword id="KW-0030">Aminoacyl-tRNA synthetase</keyword>
<keyword id="KW-0067">ATP-binding</keyword>
<keyword id="KW-0963">Cytoplasm</keyword>
<keyword id="KW-0436">Ligase</keyword>
<keyword id="KW-0547">Nucleotide-binding</keyword>
<keyword id="KW-0648">Protein biosynthesis</keyword>
<keyword id="KW-1185">Reference proteome</keyword>
<name>SYGB_VIBCH</name>
<proteinExistence type="inferred from homology"/>
<organism>
    <name type="scientific">Vibrio cholerae serotype O1 (strain ATCC 39315 / El Tor Inaba N16961)</name>
    <dbReference type="NCBI Taxonomy" id="243277"/>
    <lineage>
        <taxon>Bacteria</taxon>
        <taxon>Pseudomonadati</taxon>
        <taxon>Pseudomonadota</taxon>
        <taxon>Gammaproteobacteria</taxon>
        <taxon>Vibrionales</taxon>
        <taxon>Vibrionaceae</taxon>
        <taxon>Vibrio</taxon>
    </lineage>
</organism>
<sequence length="688" mass="75925">MAKEFLIELGTEELPPKQLRTLAEAFAANFAAELATADIAHEGVTWFATPRRLALKVANLAESQPDRVVEKRGPAVNVAFDADGKPTKAAEGWARGNGITVEQAERLVTDKGEWLLFKEQVQGQQTASVVVEMAAKALANLPIAKPMRWGDKETQFIRPVKTLTILFGSELIQGEILGVASARTLRGHRFMGEAEFTIESAEQYPAILEERGKVIADYATRKAMIIEGSQQAAQQLGGIADLEDALVEEVTSLVEWPVVMTAKFEEKFLKVPAEALVYTMKGDQKYFPVYDASKKLLPNFIFVSNIESKEPRHIVEGNEKVVRPRLADAEFFFNTDRKRPLVDRLPLLENAIFQQQLGTIKDKTDRITELAGYIAEQIGADVEKSKRAGLLAKCDLMTSMVFEFTDTQGVMGMHYARHDGEAEEVAVALNEQYMPRFAGDELPSRGVSAAVAMADKLDTIVGIFGIGQAPKGSDPFALRRASLGVLRILVEYGYQLDLVDLIAKAKSLFGDRLTNANVEQEVIEFMLGRFPTWYQDAGFSIDIIQAVLARNPTKPADFDQRVKAVSHFRALEEAEALAAANKRVGNILAKYDGELGEEIDLALLQEDAEKALAEAVEIMAEALEPAFATGNYQEALSKLAGLRAPVDAFFDNVMVMADDEALKKNRLTLLNKLRNLFLQIADISLLQK</sequence>
<accession>Q9KVW8</accession>
<protein>
    <recommendedName>
        <fullName>Glycine--tRNA ligase beta subunit</fullName>
        <ecNumber>6.1.1.14</ecNumber>
    </recommendedName>
    <alternativeName>
        <fullName>Glycyl-tRNA synthetase beta subunit</fullName>
        <shortName>GlyRS</shortName>
    </alternativeName>
</protein>
<reference key="1">
    <citation type="journal article" date="2000" name="Nature">
        <title>DNA sequence of both chromosomes of the cholera pathogen Vibrio cholerae.</title>
        <authorList>
            <person name="Heidelberg J.F."/>
            <person name="Eisen J.A."/>
            <person name="Nelson W.C."/>
            <person name="Clayton R.A."/>
            <person name="Gwinn M.L."/>
            <person name="Dodson R.J."/>
            <person name="Haft D.H."/>
            <person name="Hickey E.K."/>
            <person name="Peterson J.D."/>
            <person name="Umayam L.A."/>
            <person name="Gill S.R."/>
            <person name="Nelson K.E."/>
            <person name="Read T.D."/>
            <person name="Tettelin H."/>
            <person name="Richardson D.L."/>
            <person name="Ermolaeva M.D."/>
            <person name="Vamathevan J.J."/>
            <person name="Bass S."/>
            <person name="Qin H."/>
            <person name="Dragoi I."/>
            <person name="Sellers P."/>
            <person name="McDonald L.A."/>
            <person name="Utterback T.R."/>
            <person name="Fleischmann R.D."/>
            <person name="Nierman W.C."/>
            <person name="White O."/>
            <person name="Salzberg S.L."/>
            <person name="Smith H.O."/>
            <person name="Colwell R.R."/>
            <person name="Mekalanos J.J."/>
            <person name="Venter J.C."/>
            <person name="Fraser C.M."/>
        </authorList>
    </citation>
    <scope>NUCLEOTIDE SEQUENCE [LARGE SCALE GENOMIC DNA]</scope>
    <source>
        <strain>ATCC 39315 / El Tor Inaba N16961</strain>
    </source>
</reference>
<gene>
    <name type="primary">glyS</name>
    <name type="ordered locus">VC_0020</name>
</gene>